<keyword id="KW-1185">Reference proteome</keyword>
<sequence length="413" mass="47335">MDGVSSLPNELLCHILSFLTTKEAALTSILSKRWRNLIAFVPNLYIDDTVFLHPEEGKRDRPEIIQSFMDFVDRILALQGNYPIKKCSLKCLTEVDSVRVDAWISNVLARGVTDLDLLIILDCESDDNYRLSPKCLQSSTLVSLKIDGGIDIARVDNFDILLLALPALEELALVDVIWKDEDDYPLVNMKNLFDARIIFMLQLPGAREPDDDHWFDQNVALRYSNVWKLFLGLQNVPNLYLSPDTLKVLSLYCESMPVFKNLKSLAIKSGKERGWQAIPVLLRNCPHLETLVIEGVLHNVTDKCGDACDCISREDKGRSLTSCPVKMLEIRGFRGTMKEMTMMKHFLDYFLCLKAMNIYVEENDPTELRFPEVSKCIMQMMEEYNKLSSCNVELLVTDYFYFSEKWTAKGRIL</sequence>
<organism>
    <name type="scientific">Arabidopsis thaliana</name>
    <name type="common">Mouse-ear cress</name>
    <dbReference type="NCBI Taxonomy" id="3702"/>
    <lineage>
        <taxon>Eukaryota</taxon>
        <taxon>Viridiplantae</taxon>
        <taxon>Streptophyta</taxon>
        <taxon>Embryophyta</taxon>
        <taxon>Tracheophyta</taxon>
        <taxon>Spermatophyta</taxon>
        <taxon>Magnoliopsida</taxon>
        <taxon>eudicotyledons</taxon>
        <taxon>Gunneridae</taxon>
        <taxon>Pentapetalae</taxon>
        <taxon>rosids</taxon>
        <taxon>malvids</taxon>
        <taxon>Brassicales</taxon>
        <taxon>Brassicaceae</taxon>
        <taxon>Camelineae</taxon>
        <taxon>Arabidopsis</taxon>
    </lineage>
</organism>
<proteinExistence type="predicted"/>
<feature type="chain" id="PRO_0000283476" description="Putative F-box protein At3g58820">
    <location>
        <begin position="1"/>
        <end position="413"/>
    </location>
</feature>
<feature type="domain" description="F-box" evidence="1">
    <location>
        <begin position="1"/>
        <end position="48"/>
    </location>
</feature>
<gene>
    <name type="ordered locus">At3g58820</name>
    <name type="ORF">T20N10.170</name>
</gene>
<name>FB206_ARATH</name>
<accession>Q9LXS0</accession>
<dbReference type="EMBL" id="AL353032">
    <property type="protein sequence ID" value="CAB88299.1"/>
    <property type="molecule type" value="Genomic_DNA"/>
</dbReference>
<dbReference type="EMBL" id="CP002686">
    <property type="protein sequence ID" value="AEE79836.1"/>
    <property type="molecule type" value="Genomic_DNA"/>
</dbReference>
<dbReference type="PIR" id="T49165">
    <property type="entry name" value="T49165"/>
</dbReference>
<dbReference type="RefSeq" id="NP_191441.1">
    <property type="nucleotide sequence ID" value="NM_115744.3"/>
</dbReference>
<dbReference type="BioGRID" id="10366">
    <property type="interactions" value="1"/>
</dbReference>
<dbReference type="FunCoup" id="Q9LXS0">
    <property type="interactions" value="273"/>
</dbReference>
<dbReference type="iPTMnet" id="Q9LXS0"/>
<dbReference type="PaxDb" id="3702-AT3G58820.1"/>
<dbReference type="EnsemblPlants" id="AT3G58820.1">
    <property type="protein sequence ID" value="AT3G58820.1"/>
    <property type="gene ID" value="AT3G58820"/>
</dbReference>
<dbReference type="GeneID" id="825051"/>
<dbReference type="Gramene" id="AT3G58820.1">
    <property type="protein sequence ID" value="AT3G58820.1"/>
    <property type="gene ID" value="AT3G58820"/>
</dbReference>
<dbReference type="KEGG" id="ath:AT3G58820"/>
<dbReference type="Araport" id="AT3G58820"/>
<dbReference type="TAIR" id="AT3G58820"/>
<dbReference type="HOGENOM" id="CLU_010721_7_1_1"/>
<dbReference type="InParanoid" id="Q9LXS0"/>
<dbReference type="OMA" id="MEEMAII"/>
<dbReference type="OrthoDB" id="612216at2759"/>
<dbReference type="PhylomeDB" id="Q9LXS0"/>
<dbReference type="PRO" id="PR:Q9LXS0"/>
<dbReference type="Proteomes" id="UP000006548">
    <property type="component" value="Chromosome 3"/>
</dbReference>
<dbReference type="ExpressionAtlas" id="Q9LXS0">
    <property type="expression patterns" value="baseline and differential"/>
</dbReference>
<dbReference type="CDD" id="cd22160">
    <property type="entry name" value="F-box_AtFBL13-like"/>
    <property type="match status" value="1"/>
</dbReference>
<dbReference type="Gene3D" id="1.20.1280.50">
    <property type="match status" value="1"/>
</dbReference>
<dbReference type="Gene3D" id="3.80.10.10">
    <property type="entry name" value="Ribonuclease Inhibitor"/>
    <property type="match status" value="1"/>
</dbReference>
<dbReference type="InterPro" id="IPR036047">
    <property type="entry name" value="F-box-like_dom_sf"/>
</dbReference>
<dbReference type="InterPro" id="IPR053781">
    <property type="entry name" value="F-box_AtFBL13-like"/>
</dbReference>
<dbReference type="InterPro" id="IPR001810">
    <property type="entry name" value="F-box_dom"/>
</dbReference>
<dbReference type="InterPro" id="IPR006566">
    <property type="entry name" value="FBD"/>
</dbReference>
<dbReference type="InterPro" id="IPR055294">
    <property type="entry name" value="FBL60-like"/>
</dbReference>
<dbReference type="InterPro" id="IPR032675">
    <property type="entry name" value="LRR_dom_sf"/>
</dbReference>
<dbReference type="PANTHER" id="PTHR31293">
    <property type="entry name" value="RNI-LIKE SUPERFAMILY PROTEIN"/>
    <property type="match status" value="1"/>
</dbReference>
<dbReference type="PANTHER" id="PTHR31293:SF16">
    <property type="entry name" value="RNI-LIKE SUPERFAMILY PROTEIN"/>
    <property type="match status" value="1"/>
</dbReference>
<dbReference type="Pfam" id="PF00646">
    <property type="entry name" value="F-box"/>
    <property type="match status" value="1"/>
</dbReference>
<dbReference type="SMART" id="SM00579">
    <property type="entry name" value="FBD"/>
    <property type="match status" value="1"/>
</dbReference>
<dbReference type="SMART" id="SM00256">
    <property type="entry name" value="FBOX"/>
    <property type="match status" value="1"/>
</dbReference>
<dbReference type="SUPFAM" id="SSF81383">
    <property type="entry name" value="F-box domain"/>
    <property type="match status" value="1"/>
</dbReference>
<dbReference type="PROSITE" id="PS50181">
    <property type="entry name" value="FBOX"/>
    <property type="match status" value="1"/>
</dbReference>
<reference key="1">
    <citation type="journal article" date="2000" name="Nature">
        <title>Sequence and analysis of chromosome 3 of the plant Arabidopsis thaliana.</title>
        <authorList>
            <person name="Salanoubat M."/>
            <person name="Lemcke K."/>
            <person name="Rieger M."/>
            <person name="Ansorge W."/>
            <person name="Unseld M."/>
            <person name="Fartmann B."/>
            <person name="Valle G."/>
            <person name="Bloecker H."/>
            <person name="Perez-Alonso M."/>
            <person name="Obermaier B."/>
            <person name="Delseny M."/>
            <person name="Boutry M."/>
            <person name="Grivell L.A."/>
            <person name="Mache R."/>
            <person name="Puigdomenech P."/>
            <person name="De Simone V."/>
            <person name="Choisne N."/>
            <person name="Artiguenave F."/>
            <person name="Robert C."/>
            <person name="Brottier P."/>
            <person name="Wincker P."/>
            <person name="Cattolico L."/>
            <person name="Weissenbach J."/>
            <person name="Saurin W."/>
            <person name="Quetier F."/>
            <person name="Schaefer M."/>
            <person name="Mueller-Auer S."/>
            <person name="Gabel C."/>
            <person name="Fuchs M."/>
            <person name="Benes V."/>
            <person name="Wurmbach E."/>
            <person name="Drzonek H."/>
            <person name="Erfle H."/>
            <person name="Jordan N."/>
            <person name="Bangert S."/>
            <person name="Wiedelmann R."/>
            <person name="Kranz H."/>
            <person name="Voss H."/>
            <person name="Holland R."/>
            <person name="Brandt P."/>
            <person name="Nyakatura G."/>
            <person name="Vezzi A."/>
            <person name="D'Angelo M."/>
            <person name="Pallavicini A."/>
            <person name="Toppo S."/>
            <person name="Simionati B."/>
            <person name="Conrad A."/>
            <person name="Hornischer K."/>
            <person name="Kauer G."/>
            <person name="Loehnert T.-H."/>
            <person name="Nordsiek G."/>
            <person name="Reichelt J."/>
            <person name="Scharfe M."/>
            <person name="Schoen O."/>
            <person name="Bargues M."/>
            <person name="Terol J."/>
            <person name="Climent J."/>
            <person name="Navarro P."/>
            <person name="Collado C."/>
            <person name="Perez-Perez A."/>
            <person name="Ottenwaelder B."/>
            <person name="Duchemin D."/>
            <person name="Cooke R."/>
            <person name="Laudie M."/>
            <person name="Berger-Llauro C."/>
            <person name="Purnelle B."/>
            <person name="Masuy D."/>
            <person name="de Haan M."/>
            <person name="Maarse A.C."/>
            <person name="Alcaraz J.-P."/>
            <person name="Cottet A."/>
            <person name="Casacuberta E."/>
            <person name="Monfort A."/>
            <person name="Argiriou A."/>
            <person name="Flores M."/>
            <person name="Liguori R."/>
            <person name="Vitale D."/>
            <person name="Mannhaupt G."/>
            <person name="Haase D."/>
            <person name="Schoof H."/>
            <person name="Rudd S."/>
            <person name="Zaccaria P."/>
            <person name="Mewes H.-W."/>
            <person name="Mayer K.F.X."/>
            <person name="Kaul S."/>
            <person name="Town C.D."/>
            <person name="Koo H.L."/>
            <person name="Tallon L.J."/>
            <person name="Jenkins J."/>
            <person name="Rooney T."/>
            <person name="Rizzo M."/>
            <person name="Walts A."/>
            <person name="Utterback T."/>
            <person name="Fujii C.Y."/>
            <person name="Shea T.P."/>
            <person name="Creasy T.H."/>
            <person name="Haas B."/>
            <person name="Maiti R."/>
            <person name="Wu D."/>
            <person name="Peterson J."/>
            <person name="Van Aken S."/>
            <person name="Pai G."/>
            <person name="Militscher J."/>
            <person name="Sellers P."/>
            <person name="Gill J.E."/>
            <person name="Feldblyum T.V."/>
            <person name="Preuss D."/>
            <person name="Lin X."/>
            <person name="Nierman W.C."/>
            <person name="Salzberg S.L."/>
            <person name="White O."/>
            <person name="Venter J.C."/>
            <person name="Fraser C.M."/>
            <person name="Kaneko T."/>
            <person name="Nakamura Y."/>
            <person name="Sato S."/>
            <person name="Kato T."/>
            <person name="Asamizu E."/>
            <person name="Sasamoto S."/>
            <person name="Kimura T."/>
            <person name="Idesawa K."/>
            <person name="Kawashima K."/>
            <person name="Kishida Y."/>
            <person name="Kiyokawa C."/>
            <person name="Kohara M."/>
            <person name="Matsumoto M."/>
            <person name="Matsuno A."/>
            <person name="Muraki A."/>
            <person name="Nakayama S."/>
            <person name="Nakazaki N."/>
            <person name="Shinpo S."/>
            <person name="Takeuchi C."/>
            <person name="Wada T."/>
            <person name="Watanabe A."/>
            <person name="Yamada M."/>
            <person name="Yasuda M."/>
            <person name="Tabata S."/>
        </authorList>
    </citation>
    <scope>NUCLEOTIDE SEQUENCE [LARGE SCALE GENOMIC DNA]</scope>
    <source>
        <strain>cv. Columbia</strain>
    </source>
</reference>
<reference key="2">
    <citation type="journal article" date="2017" name="Plant J.">
        <title>Araport11: a complete reannotation of the Arabidopsis thaliana reference genome.</title>
        <authorList>
            <person name="Cheng C.Y."/>
            <person name="Krishnakumar V."/>
            <person name="Chan A.P."/>
            <person name="Thibaud-Nissen F."/>
            <person name="Schobel S."/>
            <person name="Town C.D."/>
        </authorList>
    </citation>
    <scope>GENOME REANNOTATION</scope>
    <source>
        <strain>cv. Columbia</strain>
    </source>
</reference>
<protein>
    <recommendedName>
        <fullName>Putative F-box protein At3g58820</fullName>
    </recommendedName>
</protein>
<evidence type="ECO:0000255" key="1">
    <source>
        <dbReference type="PROSITE-ProRule" id="PRU00080"/>
    </source>
</evidence>